<dbReference type="EMBL" id="AE016879">
    <property type="protein sequence ID" value="AAP25794.1"/>
    <property type="molecule type" value="Genomic_DNA"/>
</dbReference>
<dbReference type="EMBL" id="AE017334">
    <property type="protein sequence ID" value="AAT31015.1"/>
    <property type="molecule type" value="Genomic_DNA"/>
</dbReference>
<dbReference type="EMBL" id="AE017225">
    <property type="protein sequence ID" value="AAT54074.1"/>
    <property type="molecule type" value="Genomic_DNA"/>
</dbReference>
<dbReference type="RefSeq" id="NP_844308.1">
    <property type="nucleotide sequence ID" value="NC_003997.3"/>
</dbReference>
<dbReference type="RefSeq" id="WP_000799186.1">
    <property type="nucleotide sequence ID" value="NZ_WXXJ01000007.1"/>
</dbReference>
<dbReference type="RefSeq" id="YP_028023.1">
    <property type="nucleotide sequence ID" value="NC_005945.1"/>
</dbReference>
<dbReference type="SMR" id="Q81RY8"/>
<dbReference type="STRING" id="261594.GBAA_1897"/>
<dbReference type="DNASU" id="1086372"/>
<dbReference type="GeneID" id="45021826"/>
<dbReference type="KEGG" id="ban:BA_1897"/>
<dbReference type="KEGG" id="bar:GBAA_1897"/>
<dbReference type="KEGG" id="bat:BAS1759"/>
<dbReference type="PATRIC" id="fig|198094.11.peg.1869"/>
<dbReference type="eggNOG" id="COG4224">
    <property type="taxonomic scope" value="Bacteria"/>
</dbReference>
<dbReference type="HOGENOM" id="CLU_173137_0_2_9"/>
<dbReference type="OMA" id="KMARINE"/>
<dbReference type="OrthoDB" id="390105at2"/>
<dbReference type="Proteomes" id="UP000000427">
    <property type="component" value="Chromosome"/>
</dbReference>
<dbReference type="Proteomes" id="UP000000594">
    <property type="component" value="Chromosome"/>
</dbReference>
<dbReference type="GO" id="GO:0005737">
    <property type="term" value="C:cytoplasm"/>
    <property type="evidence" value="ECO:0007669"/>
    <property type="project" value="UniProtKB-SubCell"/>
</dbReference>
<dbReference type="Gene3D" id="1.10.287.540">
    <property type="entry name" value="Helix hairpin bin"/>
    <property type="match status" value="1"/>
</dbReference>
<dbReference type="HAMAP" id="MF_01103">
    <property type="entry name" value="UPF0291"/>
    <property type="match status" value="1"/>
</dbReference>
<dbReference type="InterPro" id="IPR009242">
    <property type="entry name" value="DUF896"/>
</dbReference>
<dbReference type="NCBIfam" id="NF002452">
    <property type="entry name" value="PRK01631.1"/>
    <property type="match status" value="1"/>
</dbReference>
<dbReference type="PANTHER" id="PTHR37300:SF2">
    <property type="entry name" value="UPF0291 PROTEIN BC_1827"/>
    <property type="match status" value="1"/>
</dbReference>
<dbReference type="PANTHER" id="PTHR37300">
    <property type="entry name" value="UPF0291 PROTEIN CBO2609/CLC_2481"/>
    <property type="match status" value="1"/>
</dbReference>
<dbReference type="Pfam" id="PF05979">
    <property type="entry name" value="DUF896"/>
    <property type="match status" value="1"/>
</dbReference>
<dbReference type="SUPFAM" id="SSF158221">
    <property type="entry name" value="YnzC-like"/>
    <property type="match status" value="1"/>
</dbReference>
<proteinExistence type="inferred from homology"/>
<comment type="subcellular location">
    <subcellularLocation>
        <location evidence="1">Cytoplasm</location>
    </subcellularLocation>
</comment>
<comment type="similarity">
    <text evidence="1">Belongs to the UPF0291 family.</text>
</comment>
<sequence>MKNTLFRINELSKKEKATGLTVDEKQEQQMLRQNYTQTFRGSLDSILLNTKIVDQNGLNVTPAALQDAQIRLKLSK</sequence>
<gene>
    <name type="ordered locus">BA_1897</name>
    <name type="ordered locus">GBAA_1897</name>
    <name type="ordered locus">BAS1759</name>
</gene>
<reference key="1">
    <citation type="journal article" date="2003" name="Nature">
        <title>The genome sequence of Bacillus anthracis Ames and comparison to closely related bacteria.</title>
        <authorList>
            <person name="Read T.D."/>
            <person name="Peterson S.N."/>
            <person name="Tourasse N.J."/>
            <person name="Baillie L.W."/>
            <person name="Paulsen I.T."/>
            <person name="Nelson K.E."/>
            <person name="Tettelin H."/>
            <person name="Fouts D.E."/>
            <person name="Eisen J.A."/>
            <person name="Gill S.R."/>
            <person name="Holtzapple E.K."/>
            <person name="Okstad O.A."/>
            <person name="Helgason E."/>
            <person name="Rilstone J."/>
            <person name="Wu M."/>
            <person name="Kolonay J.F."/>
            <person name="Beanan M.J."/>
            <person name="Dodson R.J."/>
            <person name="Brinkac L.M."/>
            <person name="Gwinn M.L."/>
            <person name="DeBoy R.T."/>
            <person name="Madpu R."/>
            <person name="Daugherty S.C."/>
            <person name="Durkin A.S."/>
            <person name="Haft D.H."/>
            <person name="Nelson W.C."/>
            <person name="Peterson J.D."/>
            <person name="Pop M."/>
            <person name="Khouri H.M."/>
            <person name="Radune D."/>
            <person name="Benton J.L."/>
            <person name="Mahamoud Y."/>
            <person name="Jiang L."/>
            <person name="Hance I.R."/>
            <person name="Weidman J.F."/>
            <person name="Berry K.J."/>
            <person name="Plaut R.D."/>
            <person name="Wolf A.M."/>
            <person name="Watkins K.L."/>
            <person name="Nierman W.C."/>
            <person name="Hazen A."/>
            <person name="Cline R.T."/>
            <person name="Redmond C."/>
            <person name="Thwaite J.E."/>
            <person name="White O."/>
            <person name="Salzberg S.L."/>
            <person name="Thomason B."/>
            <person name="Friedlander A.M."/>
            <person name="Koehler T.M."/>
            <person name="Hanna P.C."/>
            <person name="Kolstoe A.-B."/>
            <person name="Fraser C.M."/>
        </authorList>
    </citation>
    <scope>NUCLEOTIDE SEQUENCE [LARGE SCALE GENOMIC DNA]</scope>
    <source>
        <strain>Ames / isolate Porton</strain>
    </source>
</reference>
<reference key="2">
    <citation type="journal article" date="2009" name="J. Bacteriol.">
        <title>The complete genome sequence of Bacillus anthracis Ames 'Ancestor'.</title>
        <authorList>
            <person name="Ravel J."/>
            <person name="Jiang L."/>
            <person name="Stanley S.T."/>
            <person name="Wilson M.R."/>
            <person name="Decker R.S."/>
            <person name="Read T.D."/>
            <person name="Worsham P."/>
            <person name="Keim P.S."/>
            <person name="Salzberg S.L."/>
            <person name="Fraser-Liggett C.M."/>
            <person name="Rasko D.A."/>
        </authorList>
    </citation>
    <scope>NUCLEOTIDE SEQUENCE [LARGE SCALE GENOMIC DNA]</scope>
    <source>
        <strain>Ames ancestor</strain>
    </source>
</reference>
<reference key="3">
    <citation type="submission" date="2004-01" db="EMBL/GenBank/DDBJ databases">
        <title>Complete genome sequence of Bacillus anthracis Sterne.</title>
        <authorList>
            <person name="Brettin T.S."/>
            <person name="Bruce D."/>
            <person name="Challacombe J.F."/>
            <person name="Gilna P."/>
            <person name="Han C."/>
            <person name="Hill K."/>
            <person name="Hitchcock P."/>
            <person name="Jackson P."/>
            <person name="Keim P."/>
            <person name="Longmire J."/>
            <person name="Lucas S."/>
            <person name="Okinaka R."/>
            <person name="Richardson P."/>
            <person name="Rubin E."/>
            <person name="Tice H."/>
        </authorList>
    </citation>
    <scope>NUCLEOTIDE SEQUENCE [LARGE SCALE GENOMIC DNA]</scope>
    <source>
        <strain>Sterne</strain>
    </source>
</reference>
<organism>
    <name type="scientific">Bacillus anthracis</name>
    <dbReference type="NCBI Taxonomy" id="1392"/>
    <lineage>
        <taxon>Bacteria</taxon>
        <taxon>Bacillati</taxon>
        <taxon>Bacillota</taxon>
        <taxon>Bacilli</taxon>
        <taxon>Bacillales</taxon>
        <taxon>Bacillaceae</taxon>
        <taxon>Bacillus</taxon>
        <taxon>Bacillus cereus group</taxon>
    </lineage>
</organism>
<evidence type="ECO:0000255" key="1">
    <source>
        <dbReference type="HAMAP-Rule" id="MF_01103"/>
    </source>
</evidence>
<feature type="chain" id="PRO_0000094952" description="UPF0291 protein BA_1897/GBAA_1897/BAS1759">
    <location>
        <begin position="1"/>
        <end position="76"/>
    </location>
</feature>
<protein>
    <recommendedName>
        <fullName evidence="1">UPF0291 protein BA_1897/GBAA_1897/BAS1759</fullName>
    </recommendedName>
</protein>
<accession>Q81RY8</accession>
<accession>Q6I065</accession>
<accession>Q6KU43</accession>
<keyword id="KW-0963">Cytoplasm</keyword>
<keyword id="KW-1185">Reference proteome</keyword>
<name>Y1897_BACAN</name>